<sequence>MKIYLVGGAVRDTLLKQTVVDKDYVVVGSSVEEMLALGYQQVGKDFPVFLHPKTQQEYALARTERKTGYGYQGFSCDANKDVTLSEDLLRRDLTINAIAQDEHGTLTDPFHGIADINAKILRHVSDAFTEDPLRVLRVARFAARFHHLGFTIAPETLQLMTDIANSGELDHLTPERVWQECDKALSSQSPQVFFDVLKQCQALIVLFPEVDALFGVPQPEKWHPEIDTGIHTLMVLEQTSLLSDNKAVRFAALVHDLGKALTPKQDWPKHYGHGQKGLPVIKKLCARIRVPNEYRDLALLVSDQHQNIHNAFELRAETIVKLFDKGDFWRKPQRLTELLLCCHGDLRGRTGFEQSSYPQAEYLLHCYELASNVDVQSIIAAGYQGSQIKSQLQLNRAETINNYKIQYIESKQLH</sequence>
<evidence type="ECO:0000255" key="1">
    <source>
        <dbReference type="HAMAP-Rule" id="MF_01261"/>
    </source>
</evidence>
<organism>
    <name type="scientific">Shewanella frigidimarina (strain NCIMB 400)</name>
    <dbReference type="NCBI Taxonomy" id="318167"/>
    <lineage>
        <taxon>Bacteria</taxon>
        <taxon>Pseudomonadati</taxon>
        <taxon>Pseudomonadota</taxon>
        <taxon>Gammaproteobacteria</taxon>
        <taxon>Alteromonadales</taxon>
        <taxon>Shewanellaceae</taxon>
        <taxon>Shewanella</taxon>
    </lineage>
</organism>
<name>CCA_SHEFN</name>
<keyword id="KW-0067">ATP-binding</keyword>
<keyword id="KW-0378">Hydrolase</keyword>
<keyword id="KW-0460">Magnesium</keyword>
<keyword id="KW-0479">Metal-binding</keyword>
<keyword id="KW-0511">Multifunctional enzyme</keyword>
<keyword id="KW-0533">Nickel</keyword>
<keyword id="KW-0547">Nucleotide-binding</keyword>
<keyword id="KW-0548">Nucleotidyltransferase</keyword>
<keyword id="KW-1185">Reference proteome</keyword>
<keyword id="KW-0692">RNA repair</keyword>
<keyword id="KW-0694">RNA-binding</keyword>
<keyword id="KW-0808">Transferase</keyword>
<keyword id="KW-0819">tRNA processing</keyword>
<feature type="chain" id="PRO_1000054294" description="Multifunctional CCA protein">
    <location>
        <begin position="1"/>
        <end position="414"/>
    </location>
</feature>
<feature type="domain" description="HD" evidence="1">
    <location>
        <begin position="228"/>
        <end position="329"/>
    </location>
</feature>
<feature type="binding site" evidence="1">
    <location>
        <position position="8"/>
    </location>
    <ligand>
        <name>ATP</name>
        <dbReference type="ChEBI" id="CHEBI:30616"/>
    </ligand>
</feature>
<feature type="binding site" evidence="1">
    <location>
        <position position="8"/>
    </location>
    <ligand>
        <name>CTP</name>
        <dbReference type="ChEBI" id="CHEBI:37563"/>
    </ligand>
</feature>
<feature type="binding site" evidence="1">
    <location>
        <position position="11"/>
    </location>
    <ligand>
        <name>ATP</name>
        <dbReference type="ChEBI" id="CHEBI:30616"/>
    </ligand>
</feature>
<feature type="binding site" evidence="1">
    <location>
        <position position="11"/>
    </location>
    <ligand>
        <name>CTP</name>
        <dbReference type="ChEBI" id="CHEBI:37563"/>
    </ligand>
</feature>
<feature type="binding site" evidence="1">
    <location>
        <position position="21"/>
    </location>
    <ligand>
        <name>Mg(2+)</name>
        <dbReference type="ChEBI" id="CHEBI:18420"/>
    </ligand>
</feature>
<feature type="binding site" evidence="1">
    <location>
        <position position="23"/>
    </location>
    <ligand>
        <name>Mg(2+)</name>
        <dbReference type="ChEBI" id="CHEBI:18420"/>
    </ligand>
</feature>
<feature type="binding site" evidence="1">
    <location>
        <position position="91"/>
    </location>
    <ligand>
        <name>ATP</name>
        <dbReference type="ChEBI" id="CHEBI:30616"/>
    </ligand>
</feature>
<feature type="binding site" evidence="1">
    <location>
        <position position="91"/>
    </location>
    <ligand>
        <name>CTP</name>
        <dbReference type="ChEBI" id="CHEBI:37563"/>
    </ligand>
</feature>
<feature type="binding site" evidence="1">
    <location>
        <position position="137"/>
    </location>
    <ligand>
        <name>ATP</name>
        <dbReference type="ChEBI" id="CHEBI:30616"/>
    </ligand>
</feature>
<feature type="binding site" evidence="1">
    <location>
        <position position="137"/>
    </location>
    <ligand>
        <name>CTP</name>
        <dbReference type="ChEBI" id="CHEBI:37563"/>
    </ligand>
</feature>
<feature type="binding site" evidence="1">
    <location>
        <position position="140"/>
    </location>
    <ligand>
        <name>ATP</name>
        <dbReference type="ChEBI" id="CHEBI:30616"/>
    </ligand>
</feature>
<feature type="binding site" evidence="1">
    <location>
        <position position="140"/>
    </location>
    <ligand>
        <name>CTP</name>
        <dbReference type="ChEBI" id="CHEBI:37563"/>
    </ligand>
</feature>
<accession>Q07YU1</accession>
<reference key="1">
    <citation type="submission" date="2006-08" db="EMBL/GenBank/DDBJ databases">
        <title>Complete sequence of Shewanella frigidimarina NCIMB 400.</title>
        <authorList>
            <consortium name="US DOE Joint Genome Institute"/>
            <person name="Copeland A."/>
            <person name="Lucas S."/>
            <person name="Lapidus A."/>
            <person name="Barry K."/>
            <person name="Detter J.C."/>
            <person name="Glavina del Rio T."/>
            <person name="Hammon N."/>
            <person name="Israni S."/>
            <person name="Dalin E."/>
            <person name="Tice H."/>
            <person name="Pitluck S."/>
            <person name="Fredrickson J.K."/>
            <person name="Kolker E."/>
            <person name="McCuel L.A."/>
            <person name="DiChristina T."/>
            <person name="Nealson K.H."/>
            <person name="Newman D."/>
            <person name="Tiedje J.M."/>
            <person name="Zhou J."/>
            <person name="Romine M.F."/>
            <person name="Culley D.E."/>
            <person name="Serres M."/>
            <person name="Chertkov O."/>
            <person name="Brettin T."/>
            <person name="Bruce D."/>
            <person name="Han C."/>
            <person name="Tapia R."/>
            <person name="Gilna P."/>
            <person name="Schmutz J."/>
            <person name="Larimer F."/>
            <person name="Land M."/>
            <person name="Hauser L."/>
            <person name="Kyrpides N."/>
            <person name="Mikhailova N."/>
            <person name="Richardson P."/>
        </authorList>
    </citation>
    <scope>NUCLEOTIDE SEQUENCE [LARGE SCALE GENOMIC DNA]</scope>
    <source>
        <strain>NCIMB 400</strain>
    </source>
</reference>
<proteinExistence type="inferred from homology"/>
<gene>
    <name evidence="1" type="primary">cca</name>
    <name type="ordered locus">Sfri_2984</name>
</gene>
<protein>
    <recommendedName>
        <fullName evidence="1">Multifunctional CCA protein</fullName>
    </recommendedName>
    <domain>
        <recommendedName>
            <fullName evidence="1">CCA-adding enzyme</fullName>
            <ecNumber evidence="1">2.7.7.72</ecNumber>
        </recommendedName>
        <alternativeName>
            <fullName evidence="1">CCA tRNA nucleotidyltransferase</fullName>
        </alternativeName>
        <alternativeName>
            <fullName evidence="1">tRNA CCA-pyrophosphorylase</fullName>
        </alternativeName>
        <alternativeName>
            <fullName evidence="1">tRNA adenylyl-/cytidylyl-transferase</fullName>
        </alternativeName>
        <alternativeName>
            <fullName evidence="1">tRNA nucleotidyltransferase</fullName>
        </alternativeName>
        <alternativeName>
            <fullName evidence="1">tRNA-NT</fullName>
        </alternativeName>
    </domain>
    <domain>
        <recommendedName>
            <fullName evidence="1">2'-nucleotidase</fullName>
            <ecNumber evidence="1">3.1.3.-</ecNumber>
        </recommendedName>
    </domain>
    <domain>
        <recommendedName>
            <fullName evidence="1">2',3'-cyclic phosphodiesterase</fullName>
            <ecNumber evidence="1">3.1.4.-</ecNumber>
        </recommendedName>
    </domain>
    <domain>
        <recommendedName>
            <fullName evidence="1">Phosphatase</fullName>
            <ecNumber evidence="1">3.1.3.-</ecNumber>
        </recommendedName>
    </domain>
</protein>
<comment type="function">
    <text evidence="1">Catalyzes the addition and repair of the essential 3'-terminal CCA sequence in tRNAs without using a nucleic acid template. Adds these three nucleotides in the order of C, C, and A to the tRNA nucleotide-73, using CTP and ATP as substrates and producing inorganic pyrophosphate. tRNA 3'-terminal CCA addition is required both for tRNA processing and repair. Also involved in tRNA surveillance by mediating tandem CCA addition to generate a CCACCA at the 3' terminus of unstable tRNAs. While stable tRNAs receive only 3'-terminal CCA, unstable tRNAs are marked with CCACCA and rapidly degraded.</text>
</comment>
<comment type="catalytic activity">
    <reaction evidence="1">
        <text>a tRNA precursor + 2 CTP + ATP = a tRNA with a 3' CCA end + 3 diphosphate</text>
        <dbReference type="Rhea" id="RHEA:14433"/>
        <dbReference type="Rhea" id="RHEA-COMP:10465"/>
        <dbReference type="Rhea" id="RHEA-COMP:10468"/>
        <dbReference type="ChEBI" id="CHEBI:30616"/>
        <dbReference type="ChEBI" id="CHEBI:33019"/>
        <dbReference type="ChEBI" id="CHEBI:37563"/>
        <dbReference type="ChEBI" id="CHEBI:74896"/>
        <dbReference type="ChEBI" id="CHEBI:83071"/>
        <dbReference type="EC" id="2.7.7.72"/>
    </reaction>
</comment>
<comment type="catalytic activity">
    <reaction evidence="1">
        <text>a tRNA with a 3' CCA end + 2 CTP + ATP = a tRNA with a 3' CCACCA end + 3 diphosphate</text>
        <dbReference type="Rhea" id="RHEA:76235"/>
        <dbReference type="Rhea" id="RHEA-COMP:10468"/>
        <dbReference type="Rhea" id="RHEA-COMP:18655"/>
        <dbReference type="ChEBI" id="CHEBI:30616"/>
        <dbReference type="ChEBI" id="CHEBI:33019"/>
        <dbReference type="ChEBI" id="CHEBI:37563"/>
        <dbReference type="ChEBI" id="CHEBI:83071"/>
        <dbReference type="ChEBI" id="CHEBI:195187"/>
    </reaction>
    <physiologicalReaction direction="left-to-right" evidence="1">
        <dbReference type="Rhea" id="RHEA:76236"/>
    </physiologicalReaction>
</comment>
<comment type="cofactor">
    <cofactor evidence="1">
        <name>Mg(2+)</name>
        <dbReference type="ChEBI" id="CHEBI:18420"/>
    </cofactor>
    <text evidence="1">Magnesium is required for nucleotidyltransferase activity.</text>
</comment>
<comment type="cofactor">
    <cofactor evidence="1">
        <name>Ni(2+)</name>
        <dbReference type="ChEBI" id="CHEBI:49786"/>
    </cofactor>
    <text evidence="1">Nickel for phosphatase activity.</text>
</comment>
<comment type="subunit">
    <text evidence="1">Monomer. Can also form homodimers and oligomers.</text>
</comment>
<comment type="domain">
    <text evidence="1">Comprises two domains: an N-terminal domain containing the nucleotidyltransferase activity and a C-terminal HD domain associated with both phosphodiesterase and phosphatase activities.</text>
</comment>
<comment type="miscellaneous">
    <text evidence="1">A single active site specifically recognizes both ATP and CTP and is responsible for their addition.</text>
</comment>
<comment type="similarity">
    <text evidence="1">Belongs to the tRNA nucleotidyltransferase/poly(A) polymerase family. Bacterial CCA-adding enzyme type 1 subfamily.</text>
</comment>
<dbReference type="EC" id="2.7.7.72" evidence="1"/>
<dbReference type="EC" id="3.1.3.-" evidence="1"/>
<dbReference type="EC" id="3.1.4.-" evidence="1"/>
<dbReference type="EMBL" id="CP000447">
    <property type="protein sequence ID" value="ABI72823.1"/>
    <property type="molecule type" value="Genomic_DNA"/>
</dbReference>
<dbReference type="RefSeq" id="WP_011638432.1">
    <property type="nucleotide sequence ID" value="NC_008345.1"/>
</dbReference>
<dbReference type="SMR" id="Q07YU1"/>
<dbReference type="STRING" id="318167.Sfri_2984"/>
<dbReference type="KEGG" id="sfr:Sfri_2984"/>
<dbReference type="eggNOG" id="COG0617">
    <property type="taxonomic scope" value="Bacteria"/>
</dbReference>
<dbReference type="HOGENOM" id="CLU_015961_1_1_6"/>
<dbReference type="OrthoDB" id="9805698at2"/>
<dbReference type="Proteomes" id="UP000000684">
    <property type="component" value="Chromosome"/>
</dbReference>
<dbReference type="GO" id="GO:0005524">
    <property type="term" value="F:ATP binding"/>
    <property type="evidence" value="ECO:0007669"/>
    <property type="project" value="UniProtKB-UniRule"/>
</dbReference>
<dbReference type="GO" id="GO:0004810">
    <property type="term" value="F:CCA tRNA nucleotidyltransferase activity"/>
    <property type="evidence" value="ECO:0007669"/>
    <property type="project" value="UniProtKB-UniRule"/>
</dbReference>
<dbReference type="GO" id="GO:0004112">
    <property type="term" value="F:cyclic-nucleotide phosphodiesterase activity"/>
    <property type="evidence" value="ECO:0007669"/>
    <property type="project" value="UniProtKB-UniRule"/>
</dbReference>
<dbReference type="GO" id="GO:0000287">
    <property type="term" value="F:magnesium ion binding"/>
    <property type="evidence" value="ECO:0007669"/>
    <property type="project" value="UniProtKB-UniRule"/>
</dbReference>
<dbReference type="GO" id="GO:0016791">
    <property type="term" value="F:phosphatase activity"/>
    <property type="evidence" value="ECO:0007669"/>
    <property type="project" value="UniProtKB-UniRule"/>
</dbReference>
<dbReference type="GO" id="GO:0000049">
    <property type="term" value="F:tRNA binding"/>
    <property type="evidence" value="ECO:0007669"/>
    <property type="project" value="UniProtKB-UniRule"/>
</dbReference>
<dbReference type="GO" id="GO:0042245">
    <property type="term" value="P:RNA repair"/>
    <property type="evidence" value="ECO:0007669"/>
    <property type="project" value="UniProtKB-KW"/>
</dbReference>
<dbReference type="GO" id="GO:0001680">
    <property type="term" value="P:tRNA 3'-terminal CCA addition"/>
    <property type="evidence" value="ECO:0007669"/>
    <property type="project" value="UniProtKB-UniRule"/>
</dbReference>
<dbReference type="CDD" id="cd00077">
    <property type="entry name" value="HDc"/>
    <property type="match status" value="1"/>
</dbReference>
<dbReference type="CDD" id="cd05398">
    <property type="entry name" value="NT_ClassII-CCAase"/>
    <property type="match status" value="1"/>
</dbReference>
<dbReference type="FunFam" id="1.10.3090.10:FF:000001">
    <property type="entry name" value="Multifunctional CCA protein"/>
    <property type="match status" value="1"/>
</dbReference>
<dbReference type="Gene3D" id="3.30.460.10">
    <property type="entry name" value="Beta Polymerase, domain 2"/>
    <property type="match status" value="1"/>
</dbReference>
<dbReference type="Gene3D" id="1.10.3090.10">
    <property type="entry name" value="cca-adding enzyme, domain 2"/>
    <property type="match status" value="1"/>
</dbReference>
<dbReference type="HAMAP" id="MF_01261">
    <property type="entry name" value="CCA_bact_type1"/>
    <property type="match status" value="1"/>
</dbReference>
<dbReference type="HAMAP" id="MF_01262">
    <property type="entry name" value="CCA_bact_type2"/>
    <property type="match status" value="1"/>
</dbReference>
<dbReference type="InterPro" id="IPR012006">
    <property type="entry name" value="CCA_bact"/>
</dbReference>
<dbReference type="InterPro" id="IPR003607">
    <property type="entry name" value="HD/PDEase_dom"/>
</dbReference>
<dbReference type="InterPro" id="IPR006674">
    <property type="entry name" value="HD_domain"/>
</dbReference>
<dbReference type="InterPro" id="IPR043519">
    <property type="entry name" value="NT_sf"/>
</dbReference>
<dbReference type="InterPro" id="IPR002646">
    <property type="entry name" value="PolA_pol_head_dom"/>
</dbReference>
<dbReference type="InterPro" id="IPR032828">
    <property type="entry name" value="PolyA_RNA-bd"/>
</dbReference>
<dbReference type="InterPro" id="IPR050124">
    <property type="entry name" value="tRNA_CCA-adding_enzyme"/>
</dbReference>
<dbReference type="NCBIfam" id="NF008137">
    <property type="entry name" value="PRK10885.1"/>
    <property type="match status" value="1"/>
</dbReference>
<dbReference type="PANTHER" id="PTHR47545">
    <property type="entry name" value="MULTIFUNCTIONAL CCA PROTEIN"/>
    <property type="match status" value="1"/>
</dbReference>
<dbReference type="PANTHER" id="PTHR47545:SF1">
    <property type="entry name" value="MULTIFUNCTIONAL CCA PROTEIN"/>
    <property type="match status" value="1"/>
</dbReference>
<dbReference type="Pfam" id="PF01966">
    <property type="entry name" value="HD"/>
    <property type="match status" value="1"/>
</dbReference>
<dbReference type="Pfam" id="PF01743">
    <property type="entry name" value="PolyA_pol"/>
    <property type="match status" value="1"/>
</dbReference>
<dbReference type="Pfam" id="PF12627">
    <property type="entry name" value="PolyA_pol_RNAbd"/>
    <property type="match status" value="1"/>
</dbReference>
<dbReference type="PIRSF" id="PIRSF000813">
    <property type="entry name" value="CCA_bact"/>
    <property type="match status" value="1"/>
</dbReference>
<dbReference type="SUPFAM" id="SSF81301">
    <property type="entry name" value="Nucleotidyltransferase"/>
    <property type="match status" value="1"/>
</dbReference>
<dbReference type="SUPFAM" id="SSF81891">
    <property type="entry name" value="Poly A polymerase C-terminal region-like"/>
    <property type="match status" value="1"/>
</dbReference>
<dbReference type="PROSITE" id="PS51831">
    <property type="entry name" value="HD"/>
    <property type="match status" value="1"/>
</dbReference>